<dbReference type="EC" id="6.3.4.20" evidence="1"/>
<dbReference type="EMBL" id="AM286415">
    <property type="protein sequence ID" value="CAL13162.1"/>
    <property type="molecule type" value="Genomic_DNA"/>
</dbReference>
<dbReference type="RefSeq" id="WP_005167647.1">
    <property type="nucleotide sequence ID" value="NC_008800.1"/>
</dbReference>
<dbReference type="RefSeq" id="YP_001007309.1">
    <property type="nucleotide sequence ID" value="NC_008800.1"/>
</dbReference>
<dbReference type="SMR" id="A1JNM3"/>
<dbReference type="KEGG" id="yen:YE3127"/>
<dbReference type="PATRIC" id="fig|393305.7.peg.3329"/>
<dbReference type="eggNOG" id="COG0603">
    <property type="taxonomic scope" value="Bacteria"/>
</dbReference>
<dbReference type="HOGENOM" id="CLU_081854_0_0_6"/>
<dbReference type="OrthoDB" id="9789567at2"/>
<dbReference type="UniPathway" id="UPA00391"/>
<dbReference type="Proteomes" id="UP000000642">
    <property type="component" value="Chromosome"/>
</dbReference>
<dbReference type="GO" id="GO:0005524">
    <property type="term" value="F:ATP binding"/>
    <property type="evidence" value="ECO:0007669"/>
    <property type="project" value="UniProtKB-UniRule"/>
</dbReference>
<dbReference type="GO" id="GO:0016879">
    <property type="term" value="F:ligase activity, forming carbon-nitrogen bonds"/>
    <property type="evidence" value="ECO:0007669"/>
    <property type="project" value="UniProtKB-UniRule"/>
</dbReference>
<dbReference type="GO" id="GO:0008270">
    <property type="term" value="F:zinc ion binding"/>
    <property type="evidence" value="ECO:0007669"/>
    <property type="project" value="UniProtKB-UniRule"/>
</dbReference>
<dbReference type="GO" id="GO:0008616">
    <property type="term" value="P:queuosine biosynthetic process"/>
    <property type="evidence" value="ECO:0007669"/>
    <property type="project" value="UniProtKB-UniRule"/>
</dbReference>
<dbReference type="CDD" id="cd01995">
    <property type="entry name" value="QueC-like"/>
    <property type="match status" value="1"/>
</dbReference>
<dbReference type="FunFam" id="3.40.50.620:FF:000017">
    <property type="entry name" value="7-cyano-7-deazaguanine synthase"/>
    <property type="match status" value="1"/>
</dbReference>
<dbReference type="Gene3D" id="3.40.50.620">
    <property type="entry name" value="HUPs"/>
    <property type="match status" value="1"/>
</dbReference>
<dbReference type="HAMAP" id="MF_01633">
    <property type="entry name" value="QueC"/>
    <property type="match status" value="1"/>
</dbReference>
<dbReference type="InterPro" id="IPR018317">
    <property type="entry name" value="QueC"/>
</dbReference>
<dbReference type="InterPro" id="IPR014729">
    <property type="entry name" value="Rossmann-like_a/b/a_fold"/>
</dbReference>
<dbReference type="NCBIfam" id="TIGR00364">
    <property type="entry name" value="7-cyano-7-deazaguanine synthase QueC"/>
    <property type="match status" value="1"/>
</dbReference>
<dbReference type="NCBIfam" id="NF008317">
    <property type="entry name" value="PRK11106.1"/>
    <property type="match status" value="1"/>
</dbReference>
<dbReference type="PANTHER" id="PTHR42914">
    <property type="entry name" value="7-CYANO-7-DEAZAGUANINE SYNTHASE"/>
    <property type="match status" value="1"/>
</dbReference>
<dbReference type="PANTHER" id="PTHR42914:SF1">
    <property type="entry name" value="7-CYANO-7-DEAZAGUANINE SYNTHASE"/>
    <property type="match status" value="1"/>
</dbReference>
<dbReference type="Pfam" id="PF06508">
    <property type="entry name" value="QueC"/>
    <property type="match status" value="1"/>
</dbReference>
<dbReference type="PIRSF" id="PIRSF006293">
    <property type="entry name" value="ExsB"/>
    <property type="match status" value="1"/>
</dbReference>
<dbReference type="SUPFAM" id="SSF52402">
    <property type="entry name" value="Adenine nucleotide alpha hydrolases-like"/>
    <property type="match status" value="1"/>
</dbReference>
<gene>
    <name evidence="1" type="primary">queC</name>
    <name type="ordered locus">YE3127</name>
</gene>
<name>QUEC_YERE8</name>
<proteinExistence type="inferred from homology"/>
<comment type="function">
    <text evidence="1">Catalyzes the ATP-dependent conversion of 7-carboxy-7-deazaguanine (CDG) to 7-cyano-7-deazaguanine (preQ(0)).</text>
</comment>
<comment type="catalytic activity">
    <reaction evidence="1">
        <text>7-carboxy-7-deazaguanine + NH4(+) + ATP = 7-cyano-7-deazaguanine + ADP + phosphate + H2O + H(+)</text>
        <dbReference type="Rhea" id="RHEA:27982"/>
        <dbReference type="ChEBI" id="CHEBI:15377"/>
        <dbReference type="ChEBI" id="CHEBI:15378"/>
        <dbReference type="ChEBI" id="CHEBI:28938"/>
        <dbReference type="ChEBI" id="CHEBI:30616"/>
        <dbReference type="ChEBI" id="CHEBI:43474"/>
        <dbReference type="ChEBI" id="CHEBI:45075"/>
        <dbReference type="ChEBI" id="CHEBI:61036"/>
        <dbReference type="ChEBI" id="CHEBI:456216"/>
        <dbReference type="EC" id="6.3.4.20"/>
    </reaction>
</comment>
<comment type="cofactor">
    <cofactor evidence="1">
        <name>Zn(2+)</name>
        <dbReference type="ChEBI" id="CHEBI:29105"/>
    </cofactor>
    <text evidence="1">Binds 1 zinc ion per subunit.</text>
</comment>
<comment type="pathway">
    <text evidence="1">Purine metabolism; 7-cyano-7-deazaguanine biosynthesis.</text>
</comment>
<comment type="similarity">
    <text evidence="1">Belongs to the QueC family.</text>
</comment>
<sequence>MKRAVVVFSGGQDSTTCLIQALQQYDEVHCITFDYGQRHRAEIDVARELAIQLGAKAHKVLDVGMLNELAVSSLTRDNIPVPSYSEEGEDSIPSTFVPGRNILFLTLAAIYAYQVQAQAVITGVCETDFSGYPDCRDEFVKALNHAIDLGIGRDIAFITPLMWLDKAETWALADYYQQLDRIRHDTLTCYNGIQGDGCGQCAACHLRAKGLEFYLANKPKVILSLKQKTGLV</sequence>
<organism>
    <name type="scientific">Yersinia enterocolitica serotype O:8 / biotype 1B (strain NCTC 13174 / 8081)</name>
    <dbReference type="NCBI Taxonomy" id="393305"/>
    <lineage>
        <taxon>Bacteria</taxon>
        <taxon>Pseudomonadati</taxon>
        <taxon>Pseudomonadota</taxon>
        <taxon>Gammaproteobacteria</taxon>
        <taxon>Enterobacterales</taxon>
        <taxon>Yersiniaceae</taxon>
        <taxon>Yersinia</taxon>
    </lineage>
</organism>
<keyword id="KW-0067">ATP-binding</keyword>
<keyword id="KW-0436">Ligase</keyword>
<keyword id="KW-0479">Metal-binding</keyword>
<keyword id="KW-0547">Nucleotide-binding</keyword>
<keyword id="KW-0671">Queuosine biosynthesis</keyword>
<keyword id="KW-0862">Zinc</keyword>
<protein>
    <recommendedName>
        <fullName evidence="1">7-cyano-7-deazaguanine synthase</fullName>
        <ecNumber evidence="1">6.3.4.20</ecNumber>
    </recommendedName>
    <alternativeName>
        <fullName evidence="1">7-cyano-7-carbaguanine synthase</fullName>
    </alternativeName>
    <alternativeName>
        <fullName evidence="1">PreQ(0) synthase</fullName>
    </alternativeName>
    <alternativeName>
        <fullName evidence="1">Queuosine biosynthesis protein QueC</fullName>
    </alternativeName>
</protein>
<feature type="chain" id="PRO_1000069805" description="7-cyano-7-deazaguanine synthase">
    <location>
        <begin position="1"/>
        <end position="232"/>
    </location>
</feature>
<feature type="binding site" evidence="1">
    <location>
        <begin position="8"/>
        <end position="18"/>
    </location>
    <ligand>
        <name>ATP</name>
        <dbReference type="ChEBI" id="CHEBI:30616"/>
    </ligand>
</feature>
<feature type="binding site" evidence="1">
    <location>
        <position position="189"/>
    </location>
    <ligand>
        <name>Zn(2+)</name>
        <dbReference type="ChEBI" id="CHEBI:29105"/>
    </ligand>
</feature>
<feature type="binding site" evidence="1">
    <location>
        <position position="198"/>
    </location>
    <ligand>
        <name>Zn(2+)</name>
        <dbReference type="ChEBI" id="CHEBI:29105"/>
    </ligand>
</feature>
<feature type="binding site" evidence="1">
    <location>
        <position position="201"/>
    </location>
    <ligand>
        <name>Zn(2+)</name>
        <dbReference type="ChEBI" id="CHEBI:29105"/>
    </ligand>
</feature>
<feature type="binding site" evidence="1">
    <location>
        <position position="204"/>
    </location>
    <ligand>
        <name>Zn(2+)</name>
        <dbReference type="ChEBI" id="CHEBI:29105"/>
    </ligand>
</feature>
<evidence type="ECO:0000255" key="1">
    <source>
        <dbReference type="HAMAP-Rule" id="MF_01633"/>
    </source>
</evidence>
<accession>A1JNM3</accession>
<reference key="1">
    <citation type="journal article" date="2006" name="PLoS Genet.">
        <title>The complete genome sequence and comparative genome analysis of the high pathogenicity Yersinia enterocolitica strain 8081.</title>
        <authorList>
            <person name="Thomson N.R."/>
            <person name="Howard S."/>
            <person name="Wren B.W."/>
            <person name="Holden M.T.G."/>
            <person name="Crossman L."/>
            <person name="Challis G.L."/>
            <person name="Churcher C."/>
            <person name="Mungall K."/>
            <person name="Brooks K."/>
            <person name="Chillingworth T."/>
            <person name="Feltwell T."/>
            <person name="Abdellah Z."/>
            <person name="Hauser H."/>
            <person name="Jagels K."/>
            <person name="Maddison M."/>
            <person name="Moule S."/>
            <person name="Sanders M."/>
            <person name="Whitehead S."/>
            <person name="Quail M.A."/>
            <person name="Dougan G."/>
            <person name="Parkhill J."/>
            <person name="Prentice M.B."/>
        </authorList>
    </citation>
    <scope>NUCLEOTIDE SEQUENCE [LARGE SCALE GENOMIC DNA]</scope>
    <source>
        <strain>NCTC 13174 / 8081</strain>
    </source>
</reference>